<evidence type="ECO:0000250" key="1">
    <source>
        <dbReference type="UniProtKB" id="Q96TL7"/>
    </source>
</evidence>
<evidence type="ECO:0000255" key="2">
    <source>
        <dbReference type="PROSITE-ProRule" id="PRU00033"/>
    </source>
</evidence>
<evidence type="ECO:0000255" key="3">
    <source>
        <dbReference type="PROSITE-ProRule" id="PRU00625"/>
    </source>
</evidence>
<evidence type="ECO:0000256" key="4">
    <source>
        <dbReference type="SAM" id="MobiDB-lite"/>
    </source>
</evidence>
<evidence type="ECO:0000269" key="5">
    <source>
    </source>
</evidence>
<evidence type="ECO:0000269" key="6">
    <source>
    </source>
</evidence>
<evidence type="ECO:0000269" key="7">
    <source>
    </source>
</evidence>
<evidence type="ECO:0000269" key="8">
    <source>
    </source>
</evidence>
<evidence type="ECO:0000269" key="9">
    <source>
    </source>
</evidence>
<evidence type="ECO:0000305" key="10"/>
<evidence type="ECO:0007744" key="11">
    <source>
        <dbReference type="PDB" id="1IGN"/>
    </source>
</evidence>
<evidence type="ECO:0007744" key="12">
    <source>
    </source>
</evidence>
<evidence type="ECO:0007744" key="13">
    <source>
    </source>
</evidence>
<evidence type="ECO:0007829" key="14">
    <source>
        <dbReference type="PDB" id="1IGN"/>
    </source>
</evidence>
<evidence type="ECO:0007829" key="15">
    <source>
        <dbReference type="PDB" id="3UKG"/>
    </source>
</evidence>
<evidence type="ECO:0007829" key="16">
    <source>
        <dbReference type="PDB" id="4BJ6"/>
    </source>
</evidence>
<evidence type="ECO:0007829" key="17">
    <source>
        <dbReference type="PDB" id="4BJT"/>
    </source>
</evidence>
<evidence type="ECO:0007829" key="18">
    <source>
        <dbReference type="PDB" id="6LDM"/>
    </source>
</evidence>
<organism>
    <name type="scientific">Saccharomyces cerevisiae (strain ATCC 204508 / S288c)</name>
    <name type="common">Baker's yeast</name>
    <dbReference type="NCBI Taxonomy" id="559292"/>
    <lineage>
        <taxon>Eukaryota</taxon>
        <taxon>Fungi</taxon>
        <taxon>Dikarya</taxon>
        <taxon>Ascomycota</taxon>
        <taxon>Saccharomycotina</taxon>
        <taxon>Saccharomycetes</taxon>
        <taxon>Saccharomycetales</taxon>
        <taxon>Saccharomycetaceae</taxon>
        <taxon>Saccharomyces</taxon>
    </lineage>
</organism>
<sequence length="827" mass="92413">MSSPDDFETAPAEYVDALDPSMVVVDSGSAAVTAPSDSAAEVKANQNEENTGATAAETSEKVDQTEVEKKDDDDTTEVGVTTTTPSIADTAATANIASTSGASVTEPTTDDTAADEKKEQVSGPPLSNMKFYLNRDADAHDSLNDIDQLARLIRANGGEVLDSKPRESKENVFIVSPYNHTNLPTVTPTYIKACCQSNSLLNMENYLVPYDNFREVVDSRLQEESHSNGVDNSNSNSDNKDSIRPKTEIISTNTNGATEDSTSEKVMVDAEQQARLQEQAQLLRQHVSSTASITSGGHNDLVQIEQPQKDTSNNNNSNVNDEDNDLLTQDNNPQTADEGNASFQAQRSMISRGALPSHNKASFTDEEDEFILDVVRKNPTRRTTHTLYDEISHYVPNHTGNSIRHRFRVYLSKRLEYVYEVDKFGKLVRDDDGNLIKTKVLPPSIKRKFSADEDYTLAIAVKKQFYRDLFQIDPDTGRSLITDEDTPTAIARRNMTMDPNHVPGSEPNFAAYRTQSRRGPIAREFFKHFAEEHAAHTENAWRDRFRKFLLAYGIDDYISYYEAEKAQNREPEPMKNLTNRPKRPGVPTPGNYNSAAKRARNYSSQRNVQPTANAASANAAAAAAAAASNSYAIPENELLDEDTMNFISSLKNDLSNISNSLPFEYPHEIAEAIRSDFSNEDIYDNIDPDTISFPPKIATTDLFLPLFFHFGSTRQFMDKLHEVISGDYEPSQAEKLVQDLCDETGIRKNFSTSILTCLSGDLMVFPRYFLNMFKDNVNPPPNVPGIWTHDDDESLKSNDQEQIRKLVKKHGTGRMEMRKRFFEKDLL</sequence>
<comment type="function">
    <text evidence="6 7 8 9">Essential regulatory protein in yeast whose DNA-binding sites are found at three types of chromosomal elements: promoters, silencers, and telomeres (PubMed:3315231, PubMed:8194531). RAP1 is also involved in the regulation of telomere structure, where its binding sites are found within the terminal poly[C(1-3)A] sequences (PubMed:3315231, PubMed:8194531). The opposite regulatory functions of RAP1 are not intrinsic to its binding sites but, instead, result from interactions with different factors at promoters and silencers (PubMed:7867933, PubMed:8508768). RAP1 mediates repression of the HM loci and telomeres by recruiting the SIR complex (PubMed:7867933). May also target the binding of RIF1 and RIF2 to silencers and telomeres (PubMed:7867933). Forms with GCR1 a transcriptional activation complex that is required for expression of glycolytic and ribosomal gene (PubMed:8508768).</text>
</comment>
<comment type="subunit">
    <text evidence="7 9">Interacts (via C-terminus) with RIF1 (PubMed:7867933). Interacts (via C-terminus) with SIR3 (PubMed:7867933). Interacts (via C-terminus) with SIR4 (PubMed:7867933). Interacts with a GCR1 homodimer (PubMed:8508768).</text>
</comment>
<comment type="interaction">
    <interactant intactId="EBI-14821">
        <id>P11938</id>
    </interactant>
    <interactant intactId="EBI-6648">
        <id>Q08649</id>
        <label>ESA1</label>
    </interactant>
    <organismsDiffer>false</organismsDiffer>
    <experiments>6</experiments>
</comment>
<comment type="interaction">
    <interactant intactId="EBI-14821">
        <id>P11938</id>
    </interactant>
    <interactant intactId="EBI-7450">
        <id>P03069</id>
        <label>GCN4</label>
    </interactant>
    <organismsDiffer>false</organismsDiffer>
    <experiments>5</experiments>
</comment>
<comment type="interaction">
    <interactant intactId="EBI-14821">
        <id>P11938</id>
    </interactant>
    <interactant intactId="EBI-7463">
        <id>P07261</id>
        <label>GCR1</label>
    </interactant>
    <organismsDiffer>false</organismsDiffer>
    <experiments>2</experiments>
</comment>
<comment type="interaction">
    <interactant intactId="EBI-14821">
        <id>P11938</id>
    </interactant>
    <interactant intactId="EBI-2083307">
        <id>P29539</id>
        <label>RIF1</label>
    </interactant>
    <organismsDiffer>false</organismsDiffer>
    <experiments>3</experiments>
</comment>
<comment type="interaction">
    <interactant intactId="EBI-14821">
        <id>P11938</id>
    </interactant>
    <interactant intactId="EBI-15199">
        <id>Q06208</id>
        <label>RIF2</label>
    </interactant>
    <organismsDiffer>false</organismsDiffer>
    <experiments>5</experiments>
</comment>
<comment type="interaction">
    <interactant intactId="EBI-14821">
        <id>P11938</id>
    </interactant>
    <interactant intactId="EBI-17230">
        <id>P06701</id>
        <label>SIR3</label>
    </interactant>
    <organismsDiffer>false</organismsDiffer>
    <experiments>8</experiments>
</comment>
<comment type="interaction">
    <interactant intactId="EBI-14821">
        <id>P11938</id>
    </interactant>
    <interactant intactId="EBI-17237">
        <id>P11978</id>
        <label>SIR4</label>
    </interactant>
    <organismsDiffer>false</organismsDiffer>
    <experiments>4</experiments>
</comment>
<comment type="subcellular location">
    <subcellularLocation>
        <location evidence="1">Nucleus</location>
    </subcellularLocation>
    <subcellularLocation>
        <location evidence="1">Chromosome</location>
        <location evidence="1">Telomere</location>
    </subcellularLocation>
</comment>
<comment type="miscellaneous">
    <text evidence="5">Present with 4390 molecules/cell in log phase SD medium.</text>
</comment>
<comment type="similarity">
    <text evidence="10">Belongs to the RAP1 family.</text>
</comment>
<proteinExistence type="evidence at protein level"/>
<name>RAP1_YEAST</name>
<accession>P11938</accession>
<accession>D6W0X4</accession>
<reference key="1">
    <citation type="journal article" date="1987" name="Cell">
        <title>Purification and cloning of a DNA binding protein from yeast that binds to both silencer and activator elements.</title>
        <authorList>
            <person name="Shore D."/>
            <person name="Nasmyth K."/>
        </authorList>
    </citation>
    <scope>NUCLEOTIDE SEQUENCE [GENOMIC DNA]</scope>
    <scope>FUNCTION</scope>
    <source>
        <strain>BJ2168</strain>
    </source>
</reference>
<reference key="2">
    <citation type="journal article" date="1995" name="Yeast">
        <title>The sequence of a 13.5 kb DNA segment from the left arm of yeast chromosome XIV reveals MER1; RAP1; a new putative member of the DNA replication complex and a new putative serine/threonine phosphatase gene.</title>
        <authorList>
            <person name="Coster F."/>
            <person name="van Dyck L."/>
            <person name="Jonniaux J.-L."/>
            <person name="Purnelle B."/>
            <person name="Goffeau A."/>
        </authorList>
    </citation>
    <scope>NUCLEOTIDE SEQUENCE [GENOMIC DNA]</scope>
    <source>
        <strain>ATCC 96604 / S288c / FY1679</strain>
    </source>
</reference>
<reference key="3">
    <citation type="journal article" date="1997" name="Nature">
        <title>The nucleotide sequence of Saccharomyces cerevisiae chromosome XIV and its evolutionary implications.</title>
        <authorList>
            <person name="Philippsen P."/>
            <person name="Kleine K."/>
            <person name="Poehlmann R."/>
            <person name="Duesterhoeft A."/>
            <person name="Hamberg K."/>
            <person name="Hegemann J.H."/>
            <person name="Obermaier B."/>
            <person name="Urrestarazu L.A."/>
            <person name="Aert R."/>
            <person name="Albermann K."/>
            <person name="Altmann R."/>
            <person name="Andre B."/>
            <person name="Baladron V."/>
            <person name="Ballesta J.P.G."/>
            <person name="Becam A.-M."/>
            <person name="Beinhauer J.D."/>
            <person name="Boskovic J."/>
            <person name="Buitrago M.J."/>
            <person name="Bussereau F."/>
            <person name="Coster F."/>
            <person name="Crouzet M."/>
            <person name="D'Angelo M."/>
            <person name="Dal Pero F."/>
            <person name="De Antoni A."/>
            <person name="del Rey F."/>
            <person name="Doignon F."/>
            <person name="Domdey H."/>
            <person name="Dubois E."/>
            <person name="Fiedler T.A."/>
            <person name="Fleig U."/>
            <person name="Floeth M."/>
            <person name="Fritz C."/>
            <person name="Gaillardin C."/>
            <person name="Garcia-Cantalejo J.M."/>
            <person name="Glansdorff N."/>
            <person name="Goffeau A."/>
            <person name="Gueldener U."/>
            <person name="Herbert C.J."/>
            <person name="Heumann K."/>
            <person name="Heuss-Neitzel D."/>
            <person name="Hilbert H."/>
            <person name="Hinni K."/>
            <person name="Iraqui Houssaini I."/>
            <person name="Jacquet M."/>
            <person name="Jimenez A."/>
            <person name="Jonniaux J.-L."/>
            <person name="Karpfinger-Hartl L."/>
            <person name="Lanfranchi G."/>
            <person name="Lepingle A."/>
            <person name="Levesque H."/>
            <person name="Lyck R."/>
            <person name="Maftahi M."/>
            <person name="Mallet L."/>
            <person name="Maurer C.T.C."/>
            <person name="Messenguy F."/>
            <person name="Mewes H.-W."/>
            <person name="Moestl D."/>
            <person name="Nasr F."/>
            <person name="Nicaud J.-M."/>
            <person name="Niedenthal R.K."/>
            <person name="Pandolfo D."/>
            <person name="Pierard A."/>
            <person name="Piravandi E."/>
            <person name="Planta R.J."/>
            <person name="Pohl T.M."/>
            <person name="Purnelle B."/>
            <person name="Rebischung C."/>
            <person name="Remacha M.A."/>
            <person name="Revuelta J.L."/>
            <person name="Rinke M."/>
            <person name="Saiz J.E."/>
            <person name="Sartorello F."/>
            <person name="Scherens B."/>
            <person name="Sen-Gupta M."/>
            <person name="Soler-Mira A."/>
            <person name="Urbanus J.H.M."/>
            <person name="Valle G."/>
            <person name="Van Dyck L."/>
            <person name="Verhasselt P."/>
            <person name="Vierendeels F."/>
            <person name="Vissers S."/>
            <person name="Voet M."/>
            <person name="Volckaert G."/>
            <person name="Wach A."/>
            <person name="Wambutt R."/>
            <person name="Wedler H."/>
            <person name="Zollner A."/>
            <person name="Hani J."/>
        </authorList>
    </citation>
    <scope>NUCLEOTIDE SEQUENCE [LARGE SCALE GENOMIC DNA]</scope>
    <source>
        <strain>ATCC 204508 / S288c</strain>
    </source>
</reference>
<reference key="4">
    <citation type="journal article" date="2014" name="G3 (Bethesda)">
        <title>The reference genome sequence of Saccharomyces cerevisiae: Then and now.</title>
        <authorList>
            <person name="Engel S.R."/>
            <person name="Dietrich F.S."/>
            <person name="Fisk D.G."/>
            <person name="Binkley G."/>
            <person name="Balakrishnan R."/>
            <person name="Costanzo M.C."/>
            <person name="Dwight S.S."/>
            <person name="Hitz B.C."/>
            <person name="Karra K."/>
            <person name="Nash R.S."/>
            <person name="Weng S."/>
            <person name="Wong E.D."/>
            <person name="Lloyd P."/>
            <person name="Skrzypek M.S."/>
            <person name="Miyasato S.R."/>
            <person name="Simison M."/>
            <person name="Cherry J.M."/>
        </authorList>
    </citation>
    <scope>GENOME REANNOTATION</scope>
    <source>
        <strain>ATCC 204508 / S288c</strain>
    </source>
</reference>
<reference key="5">
    <citation type="journal article" date="1993" name="EMBO J.">
        <title>GCR1, a transcriptional activator in Saccharomyces cerevisiae, complexes with RAP1 and can function without its DNA binding domain.</title>
        <authorList>
            <person name="Tornow J."/>
            <person name="Zeng X."/>
            <person name="Gao W."/>
            <person name="Santangelo G.M."/>
        </authorList>
    </citation>
    <scope>FUNCTION</scope>
    <scope>INTERACTION WITH GCR1</scope>
</reference>
<reference key="6">
    <citation type="journal article" date="1994" name="EMBO J.">
        <title>The yeast telomere-binding protein RAP1 binds to and promotes the formation of DNA quadruplexes in telomeric DNA.</title>
        <authorList>
            <person name="Giraldo R."/>
            <person name="Rhodes D."/>
        </authorList>
    </citation>
    <scope>FUNCTION</scope>
</reference>
<reference key="7">
    <citation type="journal article" date="1995" name="Genes Dev.">
        <title>Action of a RAP1 carboxy-terminal silencing domain reveals an underlying competition between HMR and telomeres in yeast.</title>
        <authorList>
            <person name="Buck S.W."/>
            <person name="Shore D."/>
        </authorList>
    </citation>
    <scope>FUNCTION</scope>
    <scope>INTERACTION WITH RIF1 AND SIR4</scope>
</reference>
<reference key="8">
    <citation type="journal article" date="2003" name="Nature">
        <title>Global analysis of protein expression in yeast.</title>
        <authorList>
            <person name="Ghaemmaghami S."/>
            <person name="Huh W.-K."/>
            <person name="Bower K."/>
            <person name="Howson R.W."/>
            <person name="Belle A."/>
            <person name="Dephoure N."/>
            <person name="O'Shea E.K."/>
            <person name="Weissman J.S."/>
        </authorList>
    </citation>
    <scope>LEVEL OF PROTEIN EXPRESSION [LARGE SCALE ANALYSIS]</scope>
</reference>
<reference key="9">
    <citation type="journal article" date="2004" name="Nature">
        <title>The transcription factor Ifh1 is a key regulator of yeast ribosomal protein genes.</title>
        <authorList>
            <person name="Wade J.T."/>
            <person name="Hall D.B."/>
            <person name="Struhl K."/>
        </authorList>
    </citation>
    <scope>FUNCTION</scope>
</reference>
<reference key="10">
    <citation type="journal article" date="2007" name="J. Proteome Res.">
        <title>Large-scale phosphorylation analysis of alpha-factor-arrested Saccharomyces cerevisiae.</title>
        <authorList>
            <person name="Li X."/>
            <person name="Gerber S.A."/>
            <person name="Rudner A.D."/>
            <person name="Beausoleil S.A."/>
            <person name="Haas W."/>
            <person name="Villen J."/>
            <person name="Elias J.E."/>
            <person name="Gygi S.P."/>
        </authorList>
    </citation>
    <scope>PHOSPHORYLATION [LARGE SCALE ANALYSIS] AT THR-486</scope>
    <scope>IDENTIFICATION BY MASS SPECTROMETRY [LARGE SCALE ANALYSIS]</scope>
    <source>
        <strain>ADR376</strain>
    </source>
</reference>
<reference key="11">
    <citation type="journal article" date="2008" name="Mol. Cell. Proteomics">
        <title>A multidimensional chromatography technology for in-depth phosphoproteome analysis.</title>
        <authorList>
            <person name="Albuquerque C.P."/>
            <person name="Smolka M.B."/>
            <person name="Payne S.H."/>
            <person name="Bafna V."/>
            <person name="Eng J."/>
            <person name="Zhou H."/>
        </authorList>
    </citation>
    <scope>PHOSPHORYLATION [LARGE SCALE ANALYSIS] AT SER-731</scope>
    <scope>IDENTIFICATION BY MASS SPECTROMETRY [LARGE SCALE ANALYSIS]</scope>
</reference>
<reference key="12">
    <citation type="journal article" date="2009" name="Science">
        <title>Global analysis of Cdk1 substrate phosphorylation sites provides insights into evolution.</title>
        <authorList>
            <person name="Holt L.J."/>
            <person name="Tuch B.B."/>
            <person name="Villen J."/>
            <person name="Johnson A.D."/>
            <person name="Gygi S.P."/>
            <person name="Morgan D.O."/>
        </authorList>
    </citation>
    <scope>IDENTIFICATION BY MASS SPECTROMETRY [LARGE SCALE ANALYSIS]</scope>
</reference>
<reference evidence="11" key="13">
    <citation type="journal article" date="1996" name="Cell">
        <title>The crystal structure of the DNA-binding domain of yeast RAP1 in complex with telomeric DNA.</title>
        <authorList>
            <person name="Koenig P."/>
            <person name="Giraldo R."/>
            <person name="Chapman L."/>
            <person name="Rhodes D."/>
        </authorList>
    </citation>
    <scope>X-RAY CRYSTALLOGRAPHY (2.25 ANGSTROMS) OF 360-600</scope>
</reference>
<gene>
    <name type="primary">RAP1</name>
    <name type="synonym">GRF1</name>
    <name type="synonym">TUF1</name>
    <name type="ordered locus">YNL216W</name>
    <name type="ORF">N1310</name>
</gene>
<dbReference type="EMBL" id="M18068">
    <property type="protein sequence ID" value="AAA18404.1"/>
    <property type="molecule type" value="Unassigned_DNA"/>
</dbReference>
<dbReference type="EMBL" id="X78898">
    <property type="protein sequence ID" value="CAA55491.1"/>
    <property type="molecule type" value="Genomic_DNA"/>
</dbReference>
<dbReference type="EMBL" id="Z71492">
    <property type="protein sequence ID" value="CAA96118.1"/>
    <property type="molecule type" value="Genomic_DNA"/>
</dbReference>
<dbReference type="EMBL" id="BK006947">
    <property type="protein sequence ID" value="DAA10340.1"/>
    <property type="molecule type" value="Genomic_DNA"/>
</dbReference>
<dbReference type="PIR" id="S50714">
    <property type="entry name" value="S50714"/>
</dbReference>
<dbReference type="RefSeq" id="NP_014183.1">
    <property type="nucleotide sequence ID" value="NM_001183054.1"/>
</dbReference>
<dbReference type="PDB" id="1IGN">
    <property type="method" value="X-ray"/>
    <property type="resolution" value="2.25 A"/>
    <property type="chains" value="A/B=353-598"/>
</dbReference>
<dbReference type="PDB" id="2L42">
    <property type="method" value="NMR"/>
    <property type="chains" value="A=116-212"/>
</dbReference>
<dbReference type="PDB" id="3CZ6">
    <property type="method" value="X-ray"/>
    <property type="resolution" value="1.85 A"/>
    <property type="chains" value="A/B=672-827"/>
</dbReference>
<dbReference type="PDB" id="3OWT">
    <property type="method" value="X-ray"/>
    <property type="resolution" value="2.00 A"/>
    <property type="chains" value="A/B=672-827"/>
</dbReference>
<dbReference type="PDB" id="3UKG">
    <property type="method" value="X-ray"/>
    <property type="resolution" value="2.95 A"/>
    <property type="chains" value="A=360-601"/>
</dbReference>
<dbReference type="PDB" id="4BJ5">
    <property type="method" value="X-ray"/>
    <property type="resolution" value="3.29 A"/>
    <property type="chains" value="C/E=627-827"/>
</dbReference>
<dbReference type="PDB" id="4BJ6">
    <property type="method" value="X-ray"/>
    <property type="resolution" value="3.26 A"/>
    <property type="chains" value="C/E=627-827"/>
</dbReference>
<dbReference type="PDB" id="4BJT">
    <property type="method" value="X-ray"/>
    <property type="resolution" value="1.61 A"/>
    <property type="chains" value="A/B/C=627-827"/>
</dbReference>
<dbReference type="PDB" id="4GFB">
    <property type="method" value="X-ray"/>
    <property type="resolution" value="2.99 A"/>
    <property type="chains" value="A=358-602"/>
</dbReference>
<dbReference type="PDB" id="6LDM">
    <property type="method" value="X-ray"/>
    <property type="resolution" value="2.40 A"/>
    <property type="chains" value="A=353-598"/>
</dbReference>
<dbReference type="PDBsum" id="1IGN"/>
<dbReference type="PDBsum" id="2L42"/>
<dbReference type="PDBsum" id="3CZ6"/>
<dbReference type="PDBsum" id="3OWT"/>
<dbReference type="PDBsum" id="3UKG"/>
<dbReference type="PDBsum" id="4BJ5"/>
<dbReference type="PDBsum" id="4BJ6"/>
<dbReference type="PDBsum" id="4BJT"/>
<dbReference type="PDBsum" id="4GFB"/>
<dbReference type="PDBsum" id="6LDM"/>
<dbReference type="BMRB" id="P11938"/>
<dbReference type="SMR" id="P11938"/>
<dbReference type="BioGRID" id="35620">
    <property type="interactions" value="713"/>
</dbReference>
<dbReference type="ComplexPortal" id="CPX-1200">
    <property type="entry name" value="RAP1-GCR1 transcription activation complex"/>
</dbReference>
<dbReference type="ComplexPortal" id="CPX-1229">
    <property type="entry name" value="RAP1-GCR1-GCR2 transcription activation complex"/>
</dbReference>
<dbReference type="ComplexPortal" id="CPX-2112">
    <property type="entry name" value="Telosome complex"/>
</dbReference>
<dbReference type="DIP" id="DIP-851N"/>
<dbReference type="FunCoup" id="P11938">
    <property type="interactions" value="2678"/>
</dbReference>
<dbReference type="IntAct" id="P11938">
    <property type="interactions" value="52"/>
</dbReference>
<dbReference type="MINT" id="P11938"/>
<dbReference type="STRING" id="4932.YNL216W"/>
<dbReference type="GlyGen" id="P11938">
    <property type="glycosylation" value="1 site"/>
</dbReference>
<dbReference type="iPTMnet" id="P11938"/>
<dbReference type="PaxDb" id="4932-YNL216W"/>
<dbReference type="PeptideAtlas" id="P11938"/>
<dbReference type="EnsemblFungi" id="YNL216W_mRNA">
    <property type="protein sequence ID" value="YNL216W"/>
    <property type="gene ID" value="YNL216W"/>
</dbReference>
<dbReference type="GeneID" id="855505"/>
<dbReference type="KEGG" id="sce:YNL216W"/>
<dbReference type="AGR" id="SGD:S000005160"/>
<dbReference type="SGD" id="S000005160">
    <property type="gene designation" value="RAP1"/>
</dbReference>
<dbReference type="VEuPathDB" id="FungiDB:YNL216W"/>
<dbReference type="eggNOG" id="ENOG502S85C">
    <property type="taxonomic scope" value="Eukaryota"/>
</dbReference>
<dbReference type="HOGENOM" id="CLU_014729_0_0_1"/>
<dbReference type="InParanoid" id="P11938"/>
<dbReference type="OMA" id="TENAWRD"/>
<dbReference type="OrthoDB" id="435460at2759"/>
<dbReference type="BioCyc" id="YEAST:G3O-33222-MONOMER"/>
<dbReference type="BioGRID-ORCS" id="855505">
    <property type="hits" value="9 hits in 13 CRISPR screens"/>
</dbReference>
<dbReference type="CD-CODE" id="E03F929F">
    <property type="entry name" value="Stress granule"/>
</dbReference>
<dbReference type="EvolutionaryTrace" id="P11938"/>
<dbReference type="PRO" id="PR:P11938"/>
<dbReference type="Proteomes" id="UP000002311">
    <property type="component" value="Chromosome XIV"/>
</dbReference>
<dbReference type="RNAct" id="P11938">
    <property type="molecule type" value="protein"/>
</dbReference>
<dbReference type="GO" id="GO:0000781">
    <property type="term" value="C:chromosome, telomeric region"/>
    <property type="evidence" value="ECO:0000314"/>
    <property type="project" value="SGD"/>
</dbReference>
<dbReference type="GO" id="GO:0005829">
    <property type="term" value="C:cytosol"/>
    <property type="evidence" value="ECO:0000314"/>
    <property type="project" value="SGD"/>
</dbReference>
<dbReference type="GO" id="GO:0000228">
    <property type="term" value="C:nuclear chromosome"/>
    <property type="evidence" value="ECO:0000314"/>
    <property type="project" value="SGD"/>
</dbReference>
<dbReference type="GO" id="GO:0005634">
    <property type="term" value="C:nucleus"/>
    <property type="evidence" value="ECO:0000314"/>
    <property type="project" value="SGD"/>
</dbReference>
<dbReference type="GO" id="GO:0032993">
    <property type="term" value="C:protein-DNA complex"/>
    <property type="evidence" value="ECO:0000315"/>
    <property type="project" value="CAFA"/>
</dbReference>
<dbReference type="GO" id="GO:0070187">
    <property type="term" value="C:shelterin complex"/>
    <property type="evidence" value="ECO:0000314"/>
    <property type="project" value="SGD"/>
</dbReference>
<dbReference type="GO" id="GO:0005667">
    <property type="term" value="C:transcription regulator complex"/>
    <property type="evidence" value="ECO:0000353"/>
    <property type="project" value="ComplexPortal"/>
</dbReference>
<dbReference type="GO" id="GO:0000987">
    <property type="term" value="F:cis-regulatory region sequence-specific DNA binding"/>
    <property type="evidence" value="ECO:0000314"/>
    <property type="project" value="SGD"/>
</dbReference>
<dbReference type="GO" id="GO:0008301">
    <property type="term" value="F:DNA binding, bending"/>
    <property type="evidence" value="ECO:0000314"/>
    <property type="project" value="SGD"/>
</dbReference>
<dbReference type="GO" id="GO:0003700">
    <property type="term" value="F:DNA-binding transcription factor activity"/>
    <property type="evidence" value="ECO:0000314"/>
    <property type="project" value="SGD"/>
</dbReference>
<dbReference type="GO" id="GO:0000981">
    <property type="term" value="F:DNA-binding transcription factor activity, RNA polymerase II-specific"/>
    <property type="evidence" value="ECO:0000314"/>
    <property type="project" value="SGD"/>
</dbReference>
<dbReference type="GO" id="GO:0003691">
    <property type="term" value="F:double-stranded telomeric DNA binding"/>
    <property type="evidence" value="ECO:0000315"/>
    <property type="project" value="CAFA"/>
</dbReference>
<dbReference type="GO" id="GO:0051880">
    <property type="term" value="F:G-quadruplex DNA binding"/>
    <property type="evidence" value="ECO:0000314"/>
    <property type="project" value="SGD"/>
</dbReference>
<dbReference type="GO" id="GO:0042393">
    <property type="term" value="F:histone binding"/>
    <property type="evidence" value="ECO:0000314"/>
    <property type="project" value="SGD"/>
</dbReference>
<dbReference type="GO" id="GO:0031492">
    <property type="term" value="F:nucleosomal DNA binding"/>
    <property type="evidence" value="ECO:0000314"/>
    <property type="project" value="SGD"/>
</dbReference>
<dbReference type="GO" id="GO:0061629">
    <property type="term" value="F:RNA polymerase II-specific DNA-binding transcription factor binding"/>
    <property type="evidence" value="ECO:0000314"/>
    <property type="project" value="SGD"/>
</dbReference>
<dbReference type="GO" id="GO:0043565">
    <property type="term" value="F:sequence-specific DNA binding"/>
    <property type="evidence" value="ECO:0007005"/>
    <property type="project" value="SGD"/>
</dbReference>
<dbReference type="GO" id="GO:0017025">
    <property type="term" value="F:TBP-class protein binding"/>
    <property type="evidence" value="ECO:0000314"/>
    <property type="project" value="SGD"/>
</dbReference>
<dbReference type="GO" id="GO:0042162">
    <property type="term" value="F:telomeric DNA binding"/>
    <property type="evidence" value="ECO:0000314"/>
    <property type="project" value="SGD"/>
</dbReference>
<dbReference type="GO" id="GO:0061849">
    <property type="term" value="F:telomeric G-quadruplex DNA binding"/>
    <property type="evidence" value="ECO:0000314"/>
    <property type="project" value="SGD"/>
</dbReference>
<dbReference type="GO" id="GO:0001094">
    <property type="term" value="F:TFIID-class transcription factor complex binding"/>
    <property type="evidence" value="ECO:0000314"/>
    <property type="project" value="SGD"/>
</dbReference>
<dbReference type="GO" id="GO:0071169">
    <property type="term" value="P:establishment of protein localization to chromatin"/>
    <property type="evidence" value="ECO:0000353"/>
    <property type="project" value="SGD"/>
</dbReference>
<dbReference type="GO" id="GO:0070200">
    <property type="term" value="P:establishment of protein localization to telomere"/>
    <property type="evidence" value="ECO:0000353"/>
    <property type="project" value="SGD"/>
</dbReference>
<dbReference type="GO" id="GO:0071919">
    <property type="term" value="P:G-quadruplex DNA formation"/>
    <property type="evidence" value="ECO:0000314"/>
    <property type="project" value="CACAO"/>
</dbReference>
<dbReference type="GO" id="GO:0000122">
    <property type="term" value="P:negative regulation of transcription by RNA polymerase II"/>
    <property type="evidence" value="ECO:0000315"/>
    <property type="project" value="SGD"/>
</dbReference>
<dbReference type="GO" id="GO:0060963">
    <property type="term" value="P:positive regulation of ribosomal protein gene transcription by RNA polymerase II"/>
    <property type="evidence" value="ECO:0000303"/>
    <property type="project" value="ComplexPortal"/>
</dbReference>
<dbReference type="GO" id="GO:0045944">
    <property type="term" value="P:positive regulation of transcription by RNA polymerase II"/>
    <property type="evidence" value="ECO:0000315"/>
    <property type="project" value="SGD"/>
</dbReference>
<dbReference type="GO" id="GO:0031848">
    <property type="term" value="P:protection from non-homologous end joining at telomere"/>
    <property type="evidence" value="ECO:0000315"/>
    <property type="project" value="SGD"/>
</dbReference>
<dbReference type="GO" id="GO:0006110">
    <property type="term" value="P:regulation of glycolytic process"/>
    <property type="evidence" value="ECO:0000316"/>
    <property type="project" value="SGD"/>
</dbReference>
<dbReference type="GO" id="GO:0030466">
    <property type="term" value="P:silent mating-type cassette heterochromatin formation"/>
    <property type="evidence" value="ECO:0000316"/>
    <property type="project" value="SGD"/>
</dbReference>
<dbReference type="GO" id="GO:0031509">
    <property type="term" value="P:subtelomeric heterochromatin formation"/>
    <property type="evidence" value="ECO:0000316"/>
    <property type="project" value="SGD"/>
</dbReference>
<dbReference type="GO" id="GO:0000723">
    <property type="term" value="P:telomere maintenance"/>
    <property type="evidence" value="ECO:0000315"/>
    <property type="project" value="SGD"/>
</dbReference>
<dbReference type="GO" id="GO:0010833">
    <property type="term" value="P:telomere maintenance via telomere lengthening"/>
    <property type="evidence" value="ECO:0000314"/>
    <property type="project" value="SGD"/>
</dbReference>
<dbReference type="CDD" id="cd11655">
    <property type="entry name" value="rap1_myb-like"/>
    <property type="match status" value="2"/>
</dbReference>
<dbReference type="CDD" id="cd11653">
    <property type="entry name" value="rap1_RCT"/>
    <property type="match status" value="1"/>
</dbReference>
<dbReference type="DisProt" id="DP00020"/>
<dbReference type="FunFam" id="3.40.50.10190:FF:000093">
    <property type="entry name" value="DNA-binding protein RAP1"/>
    <property type="match status" value="1"/>
</dbReference>
<dbReference type="Gene3D" id="1.10.10.2170">
    <property type="match status" value="1"/>
</dbReference>
<dbReference type="Gene3D" id="1.20.120.1480">
    <property type="match status" value="1"/>
</dbReference>
<dbReference type="Gene3D" id="3.40.50.10190">
    <property type="entry name" value="BRCT domain"/>
    <property type="match status" value="1"/>
</dbReference>
<dbReference type="Gene3D" id="1.10.10.60">
    <property type="entry name" value="Homeodomain-like"/>
    <property type="match status" value="2"/>
</dbReference>
<dbReference type="IDEAL" id="IID50071"/>
<dbReference type="InterPro" id="IPR001357">
    <property type="entry name" value="BRCT_dom"/>
</dbReference>
<dbReference type="InterPro" id="IPR036420">
    <property type="entry name" value="BRCT_dom_sf"/>
</dbReference>
<dbReference type="InterPro" id="IPR009057">
    <property type="entry name" value="Homeodomain-like_sf"/>
</dbReference>
<dbReference type="InterPro" id="IPR017930">
    <property type="entry name" value="Myb_dom"/>
</dbReference>
<dbReference type="InterPro" id="IPR021661">
    <property type="entry name" value="Rap1_C"/>
</dbReference>
<dbReference type="InterPro" id="IPR038104">
    <property type="entry name" value="Rap1_C_sf"/>
</dbReference>
<dbReference type="InterPro" id="IPR015280">
    <property type="entry name" value="Rap1_DNA-bd"/>
</dbReference>
<dbReference type="InterPro" id="IPR001005">
    <property type="entry name" value="SANT/Myb"/>
</dbReference>
<dbReference type="InterPro" id="IPR039595">
    <property type="entry name" value="TE2IP/Rap1"/>
</dbReference>
<dbReference type="PANTHER" id="PTHR16466">
    <property type="entry name" value="TELOMERE REPEAT-BINDING FACTOR 2-INTERACTING PROTEIN 1"/>
    <property type="match status" value="1"/>
</dbReference>
<dbReference type="PANTHER" id="PTHR16466:SF6">
    <property type="entry name" value="TELOMERIC REPEAT-BINDING FACTOR 2-INTERACTING PROTEIN 1"/>
    <property type="match status" value="1"/>
</dbReference>
<dbReference type="Pfam" id="PF16589">
    <property type="entry name" value="BRCT_2"/>
    <property type="match status" value="1"/>
</dbReference>
<dbReference type="Pfam" id="PF00249">
    <property type="entry name" value="Myb_DNA-binding"/>
    <property type="match status" value="1"/>
</dbReference>
<dbReference type="Pfam" id="PF09197">
    <property type="entry name" value="Rap1-DNA-bind"/>
    <property type="match status" value="1"/>
</dbReference>
<dbReference type="Pfam" id="PF11626">
    <property type="entry name" value="Rap1_C"/>
    <property type="match status" value="1"/>
</dbReference>
<dbReference type="SMART" id="SM00292">
    <property type="entry name" value="BRCT"/>
    <property type="match status" value="1"/>
</dbReference>
<dbReference type="SMART" id="SM00717">
    <property type="entry name" value="SANT"/>
    <property type="match status" value="1"/>
</dbReference>
<dbReference type="SUPFAM" id="SSF52113">
    <property type="entry name" value="BRCT domain"/>
    <property type="match status" value="1"/>
</dbReference>
<dbReference type="SUPFAM" id="SSF46689">
    <property type="entry name" value="Homeodomain-like"/>
    <property type="match status" value="2"/>
</dbReference>
<dbReference type="PROSITE" id="PS50172">
    <property type="entry name" value="BRCT"/>
    <property type="match status" value="1"/>
</dbReference>
<dbReference type="PROSITE" id="PS51294">
    <property type="entry name" value="HTH_MYB"/>
    <property type="match status" value="1"/>
</dbReference>
<keyword id="KW-0002">3D-structure</keyword>
<keyword id="KW-0010">Activator</keyword>
<keyword id="KW-0158">Chromosome</keyword>
<keyword id="KW-0238">DNA-binding</keyword>
<keyword id="KW-0539">Nucleus</keyword>
<keyword id="KW-0597">Phosphoprotein</keyword>
<keyword id="KW-1185">Reference proteome</keyword>
<keyword id="KW-0678">Repressor</keyword>
<keyword id="KW-0779">Telomere</keyword>
<keyword id="KW-0804">Transcription</keyword>
<keyword id="KW-0805">Transcription regulation</keyword>
<feature type="chain" id="PRO_0000197112" description="DNA-binding protein RAP1">
    <location>
        <begin position="1"/>
        <end position="827"/>
    </location>
</feature>
<feature type="domain" description="BRCT" evidence="2">
    <location>
        <begin position="121"/>
        <end position="208"/>
    </location>
</feature>
<feature type="domain" description="HTH myb-type" evidence="3">
    <location>
        <begin position="355"/>
        <end position="415"/>
    </location>
</feature>
<feature type="DNA-binding region" description="H-T-H motif" evidence="3">
    <location>
        <begin position="388"/>
        <end position="411"/>
    </location>
</feature>
<feature type="region of interest" description="Disordered" evidence="4">
    <location>
        <begin position="29"/>
        <end position="128"/>
    </location>
</feature>
<feature type="region of interest" description="Disordered" evidence="4">
    <location>
        <begin position="221"/>
        <end position="268"/>
    </location>
</feature>
<feature type="region of interest" description="Disordered" evidence="4">
    <location>
        <begin position="308"/>
        <end position="339"/>
    </location>
</feature>
<feature type="region of interest" description="Disordered" evidence="4">
    <location>
        <begin position="567"/>
        <end position="613"/>
    </location>
</feature>
<feature type="region of interest" description="Activation domain">
    <location>
        <begin position="630"/>
        <end position="695"/>
    </location>
</feature>
<feature type="compositionally biased region" description="Polar residues" evidence="4">
    <location>
        <begin position="44"/>
        <end position="57"/>
    </location>
</feature>
<feature type="compositionally biased region" description="Basic and acidic residues" evidence="4">
    <location>
        <begin position="58"/>
        <end position="72"/>
    </location>
</feature>
<feature type="compositionally biased region" description="Polar residues" evidence="4">
    <location>
        <begin position="92"/>
        <end position="107"/>
    </location>
</feature>
<feature type="compositionally biased region" description="Low complexity" evidence="4">
    <location>
        <begin position="227"/>
        <end position="237"/>
    </location>
</feature>
<feature type="compositionally biased region" description="Basic and acidic residues" evidence="4">
    <location>
        <begin position="238"/>
        <end position="247"/>
    </location>
</feature>
<feature type="compositionally biased region" description="Polar residues" evidence="4">
    <location>
        <begin position="249"/>
        <end position="260"/>
    </location>
</feature>
<feature type="compositionally biased region" description="Low complexity" evidence="4">
    <location>
        <begin position="310"/>
        <end position="319"/>
    </location>
</feature>
<feature type="compositionally biased region" description="Polar residues" evidence="4">
    <location>
        <begin position="326"/>
        <end position="339"/>
    </location>
</feature>
<feature type="compositionally biased region" description="Polar residues" evidence="4">
    <location>
        <begin position="601"/>
        <end position="611"/>
    </location>
</feature>
<feature type="modified residue" description="Phosphothreonine" evidence="12">
    <location>
        <position position="486"/>
    </location>
</feature>
<feature type="modified residue" description="Phosphoserine" evidence="13">
    <location>
        <position position="731"/>
    </location>
</feature>
<feature type="sequence conflict" description="In Ref. 1; AAA18404." evidence="10" ref="1">
    <original>A</original>
    <variation>R</variation>
    <location>
        <position position="672"/>
    </location>
</feature>
<feature type="helix" evidence="14">
    <location>
        <begin position="365"/>
        <end position="376"/>
    </location>
</feature>
<feature type="helix" evidence="14">
    <location>
        <begin position="379"/>
        <end position="381"/>
    </location>
</feature>
<feature type="helix" evidence="14">
    <location>
        <begin position="386"/>
        <end position="391"/>
    </location>
</feature>
<feature type="turn" evidence="14">
    <location>
        <begin position="392"/>
        <end position="394"/>
    </location>
</feature>
<feature type="helix" evidence="14">
    <location>
        <begin position="400"/>
        <end position="409"/>
    </location>
</feature>
<feature type="helix" evidence="14">
    <location>
        <begin position="412"/>
        <end position="414"/>
    </location>
</feature>
<feature type="strand" evidence="14">
    <location>
        <begin position="437"/>
        <end position="440"/>
    </location>
</feature>
<feature type="helix" evidence="14">
    <location>
        <begin position="451"/>
        <end position="470"/>
    </location>
</feature>
<feature type="strand" evidence="14">
    <location>
        <begin position="474"/>
        <end position="476"/>
    </location>
</feature>
<feature type="strand" evidence="15">
    <location>
        <begin position="509"/>
        <end position="511"/>
    </location>
</feature>
<feature type="helix" evidence="14">
    <location>
        <begin position="525"/>
        <end position="532"/>
    </location>
</feature>
<feature type="turn" evidence="14">
    <location>
        <begin position="533"/>
        <end position="535"/>
    </location>
</feature>
<feature type="helix" evidence="14">
    <location>
        <begin position="538"/>
        <end position="547"/>
    </location>
</feature>
<feature type="helix" evidence="14">
    <location>
        <begin position="549"/>
        <end position="552"/>
    </location>
</feature>
<feature type="helix" evidence="14">
    <location>
        <begin position="554"/>
        <end position="562"/>
    </location>
</feature>
<feature type="strand" evidence="18">
    <location>
        <begin position="566"/>
        <end position="568"/>
    </location>
</feature>
<feature type="turn" evidence="15">
    <location>
        <begin position="595"/>
        <end position="597"/>
    </location>
</feature>
<feature type="helix" evidence="17">
    <location>
        <begin position="681"/>
        <end position="684"/>
    </location>
</feature>
<feature type="helix" evidence="17">
    <location>
        <begin position="688"/>
        <end position="690"/>
    </location>
</feature>
<feature type="turn" evidence="17">
    <location>
        <begin position="700"/>
        <end position="702"/>
    </location>
</feature>
<feature type="helix" evidence="17">
    <location>
        <begin position="705"/>
        <end position="708"/>
    </location>
</feature>
<feature type="helix" evidence="17">
    <location>
        <begin position="713"/>
        <end position="724"/>
    </location>
</feature>
<feature type="turn" evidence="16">
    <location>
        <begin position="730"/>
        <end position="732"/>
    </location>
</feature>
<feature type="helix" evidence="17">
    <location>
        <begin position="733"/>
        <end position="744"/>
    </location>
</feature>
<feature type="helix" evidence="17">
    <location>
        <begin position="748"/>
        <end position="757"/>
    </location>
</feature>
<feature type="turn" evidence="17">
    <location>
        <begin position="758"/>
        <end position="760"/>
    </location>
</feature>
<feature type="helix" evidence="17">
    <location>
        <begin position="762"/>
        <end position="764"/>
    </location>
</feature>
<feature type="helix" evidence="17">
    <location>
        <begin position="765"/>
        <end position="775"/>
    </location>
</feature>
<feature type="strand" evidence="16">
    <location>
        <begin position="781"/>
        <end position="783"/>
    </location>
</feature>
<feature type="helix" evidence="17">
    <location>
        <begin position="789"/>
        <end position="796"/>
    </location>
</feature>
<feature type="helix" evidence="17">
    <location>
        <begin position="800"/>
        <end position="810"/>
    </location>
</feature>
<feature type="helix" evidence="17">
    <location>
        <begin position="812"/>
        <end position="823"/>
    </location>
</feature>
<protein>
    <recommendedName>
        <fullName>DNA-binding protein RAP1</fullName>
    </recommendedName>
    <alternativeName>
        <fullName>Repressor/activator site-binding protein</fullName>
    </alternativeName>
    <alternativeName>
        <fullName>SBF-E</fullName>
    </alternativeName>
    <alternativeName>
        <fullName>TUF</fullName>
    </alternativeName>
</protein>